<reference key="1">
    <citation type="journal article" date="2006" name="Proc. Natl. Acad. Sci. U.S.A.">
        <title>The partitioned Rhizobium etli genome: genetic and metabolic redundancy in seven interacting replicons.</title>
        <authorList>
            <person name="Gonzalez V."/>
            <person name="Santamaria R.I."/>
            <person name="Bustos P."/>
            <person name="Hernandez-Gonzalez I."/>
            <person name="Medrano-Soto A."/>
            <person name="Moreno-Hagelsieb G."/>
            <person name="Janga S.C."/>
            <person name="Ramirez M.A."/>
            <person name="Jimenez-Jacinto V."/>
            <person name="Collado-Vides J."/>
            <person name="Davila G."/>
        </authorList>
    </citation>
    <scope>NUCLEOTIDE SEQUENCE [LARGE SCALE GENOMIC DNA]</scope>
    <source>
        <strain>ATCC 51251 / DSM 11541 / JCM 21823 / NBRC 15573 / CFN 42</strain>
    </source>
</reference>
<keyword id="KW-0963">Cytoplasm</keyword>
<keyword id="KW-0255">Endonuclease</keyword>
<keyword id="KW-0378">Hydrolase</keyword>
<keyword id="KW-0460">Magnesium</keyword>
<keyword id="KW-0479">Metal-binding</keyword>
<keyword id="KW-0507">mRNA processing</keyword>
<keyword id="KW-0540">Nuclease</keyword>
<keyword id="KW-1185">Reference proteome</keyword>
<keyword id="KW-0694">RNA-binding</keyword>
<keyword id="KW-0698">rRNA processing</keyword>
<keyword id="KW-0699">rRNA-binding</keyword>
<keyword id="KW-0819">tRNA processing</keyword>
<comment type="function">
    <text evidence="1">Digests double-stranded RNA. Involved in the processing of primary rRNA transcript to yield the immediate precursors to the large and small rRNAs (23S and 16S). Processes some mRNAs, and tRNAs when they are encoded in the rRNA operon. Processes pre-crRNA and tracrRNA of type II CRISPR loci if present in the organism.</text>
</comment>
<comment type="catalytic activity">
    <reaction evidence="1">
        <text>Endonucleolytic cleavage to 5'-phosphomonoester.</text>
        <dbReference type="EC" id="3.1.26.3"/>
    </reaction>
</comment>
<comment type="cofactor">
    <cofactor evidence="1">
        <name>Mg(2+)</name>
        <dbReference type="ChEBI" id="CHEBI:18420"/>
    </cofactor>
</comment>
<comment type="subunit">
    <text evidence="1">Homodimer.</text>
</comment>
<comment type="subcellular location">
    <subcellularLocation>
        <location evidence="1">Cytoplasm</location>
    </subcellularLocation>
</comment>
<comment type="similarity">
    <text evidence="1">Belongs to the ribonuclease III family.</text>
</comment>
<protein>
    <recommendedName>
        <fullName evidence="1">Ribonuclease 3</fullName>
        <ecNumber evidence="1">3.1.26.3</ecNumber>
    </recommendedName>
    <alternativeName>
        <fullName evidence="1">Ribonuclease III</fullName>
        <shortName evidence="1">RNase III</shortName>
    </alternativeName>
</protein>
<dbReference type="EC" id="3.1.26.3" evidence="1"/>
<dbReference type="EMBL" id="CP000133">
    <property type="protein sequence ID" value="ABC90193.1"/>
    <property type="molecule type" value="Genomic_DNA"/>
</dbReference>
<dbReference type="RefSeq" id="WP_011424725.1">
    <property type="nucleotide sequence ID" value="NC_007761.1"/>
</dbReference>
<dbReference type="SMR" id="Q2KAE3"/>
<dbReference type="KEGG" id="ret:RHE_CH01390"/>
<dbReference type="eggNOG" id="COG0571">
    <property type="taxonomic scope" value="Bacteria"/>
</dbReference>
<dbReference type="HOGENOM" id="CLU_000907_1_1_5"/>
<dbReference type="OrthoDB" id="9805026at2"/>
<dbReference type="Proteomes" id="UP000001936">
    <property type="component" value="Chromosome"/>
</dbReference>
<dbReference type="GO" id="GO:0005737">
    <property type="term" value="C:cytoplasm"/>
    <property type="evidence" value="ECO:0007669"/>
    <property type="project" value="UniProtKB-SubCell"/>
</dbReference>
<dbReference type="GO" id="GO:0003725">
    <property type="term" value="F:double-stranded RNA binding"/>
    <property type="evidence" value="ECO:0007669"/>
    <property type="project" value="TreeGrafter"/>
</dbReference>
<dbReference type="GO" id="GO:0046872">
    <property type="term" value="F:metal ion binding"/>
    <property type="evidence" value="ECO:0007669"/>
    <property type="project" value="UniProtKB-KW"/>
</dbReference>
<dbReference type="GO" id="GO:0004525">
    <property type="term" value="F:ribonuclease III activity"/>
    <property type="evidence" value="ECO:0007669"/>
    <property type="project" value="UniProtKB-UniRule"/>
</dbReference>
<dbReference type="GO" id="GO:0019843">
    <property type="term" value="F:rRNA binding"/>
    <property type="evidence" value="ECO:0007669"/>
    <property type="project" value="UniProtKB-KW"/>
</dbReference>
<dbReference type="GO" id="GO:0006397">
    <property type="term" value="P:mRNA processing"/>
    <property type="evidence" value="ECO:0007669"/>
    <property type="project" value="UniProtKB-UniRule"/>
</dbReference>
<dbReference type="GO" id="GO:0010468">
    <property type="term" value="P:regulation of gene expression"/>
    <property type="evidence" value="ECO:0007669"/>
    <property type="project" value="TreeGrafter"/>
</dbReference>
<dbReference type="GO" id="GO:0006364">
    <property type="term" value="P:rRNA processing"/>
    <property type="evidence" value="ECO:0007669"/>
    <property type="project" value="UniProtKB-UniRule"/>
</dbReference>
<dbReference type="GO" id="GO:0008033">
    <property type="term" value="P:tRNA processing"/>
    <property type="evidence" value="ECO:0007669"/>
    <property type="project" value="UniProtKB-KW"/>
</dbReference>
<dbReference type="CDD" id="cd10845">
    <property type="entry name" value="DSRM_RNAse_III_family"/>
    <property type="match status" value="1"/>
</dbReference>
<dbReference type="CDD" id="cd00593">
    <property type="entry name" value="RIBOc"/>
    <property type="match status" value="1"/>
</dbReference>
<dbReference type="Gene3D" id="3.30.160.20">
    <property type="match status" value="1"/>
</dbReference>
<dbReference type="Gene3D" id="1.10.1520.10">
    <property type="entry name" value="Ribonuclease III domain"/>
    <property type="match status" value="1"/>
</dbReference>
<dbReference type="HAMAP" id="MF_00104">
    <property type="entry name" value="RNase_III"/>
    <property type="match status" value="1"/>
</dbReference>
<dbReference type="InterPro" id="IPR014720">
    <property type="entry name" value="dsRBD_dom"/>
</dbReference>
<dbReference type="InterPro" id="IPR011907">
    <property type="entry name" value="RNase_III"/>
</dbReference>
<dbReference type="InterPro" id="IPR000999">
    <property type="entry name" value="RNase_III_dom"/>
</dbReference>
<dbReference type="InterPro" id="IPR036389">
    <property type="entry name" value="RNase_III_sf"/>
</dbReference>
<dbReference type="NCBIfam" id="TIGR02191">
    <property type="entry name" value="RNaseIII"/>
    <property type="match status" value="1"/>
</dbReference>
<dbReference type="PANTHER" id="PTHR11207:SF0">
    <property type="entry name" value="RIBONUCLEASE 3"/>
    <property type="match status" value="1"/>
</dbReference>
<dbReference type="PANTHER" id="PTHR11207">
    <property type="entry name" value="RIBONUCLEASE III"/>
    <property type="match status" value="1"/>
</dbReference>
<dbReference type="Pfam" id="PF00035">
    <property type="entry name" value="dsrm"/>
    <property type="match status" value="1"/>
</dbReference>
<dbReference type="Pfam" id="PF14622">
    <property type="entry name" value="Ribonucleas_3_3"/>
    <property type="match status" value="1"/>
</dbReference>
<dbReference type="SMART" id="SM00358">
    <property type="entry name" value="DSRM"/>
    <property type="match status" value="1"/>
</dbReference>
<dbReference type="SMART" id="SM00535">
    <property type="entry name" value="RIBOc"/>
    <property type="match status" value="1"/>
</dbReference>
<dbReference type="SUPFAM" id="SSF54768">
    <property type="entry name" value="dsRNA-binding domain-like"/>
    <property type="match status" value="1"/>
</dbReference>
<dbReference type="SUPFAM" id="SSF69065">
    <property type="entry name" value="RNase III domain-like"/>
    <property type="match status" value="1"/>
</dbReference>
<dbReference type="PROSITE" id="PS50137">
    <property type="entry name" value="DS_RBD"/>
    <property type="match status" value="1"/>
</dbReference>
<dbReference type="PROSITE" id="PS00517">
    <property type="entry name" value="RNASE_3_1"/>
    <property type="match status" value="1"/>
</dbReference>
<dbReference type="PROSITE" id="PS50142">
    <property type="entry name" value="RNASE_3_2"/>
    <property type="match status" value="1"/>
</dbReference>
<sequence>MSKAQTLSAADRAKLEALIGHDFAEKERLDRALTHASARTEKGSNYERLEFLGDRVLGLCIAELLFRTFGTAGEGELSVRLNQLVSAETCAAVADELNLHLYIRTGADVKKLTGKRMMNVRADVVESLIAAIYLDGGLEVARRFILRYWQGRAVRADGAKRDAKTELQEWSHAKFGVTPIYRVDERSGPDHDPRFRVTVEVAGIKPESGVERSKRAAEQVAATKMLEREGIWQQSPAGN</sequence>
<gene>
    <name evidence="1" type="primary">rnc</name>
    <name type="ordered locus">RHE_CH01390</name>
</gene>
<organism>
    <name type="scientific">Rhizobium etli (strain ATCC 51251 / DSM 11541 / JCM 21823 / NBRC 15573 / CFN 42)</name>
    <dbReference type="NCBI Taxonomy" id="347834"/>
    <lineage>
        <taxon>Bacteria</taxon>
        <taxon>Pseudomonadati</taxon>
        <taxon>Pseudomonadota</taxon>
        <taxon>Alphaproteobacteria</taxon>
        <taxon>Hyphomicrobiales</taxon>
        <taxon>Rhizobiaceae</taxon>
        <taxon>Rhizobium/Agrobacterium group</taxon>
        <taxon>Rhizobium</taxon>
    </lineage>
</organism>
<evidence type="ECO:0000255" key="1">
    <source>
        <dbReference type="HAMAP-Rule" id="MF_00104"/>
    </source>
</evidence>
<accession>Q2KAE3</accession>
<name>RNC_RHIEC</name>
<proteinExistence type="inferred from homology"/>
<feature type="chain" id="PRO_1000075795" description="Ribonuclease 3">
    <location>
        <begin position="1"/>
        <end position="239"/>
    </location>
</feature>
<feature type="domain" description="RNase III" evidence="1">
    <location>
        <begin position="12"/>
        <end position="137"/>
    </location>
</feature>
<feature type="domain" description="DRBM" evidence="1">
    <location>
        <begin position="162"/>
        <end position="231"/>
    </location>
</feature>
<feature type="active site" evidence="1">
    <location>
        <position position="54"/>
    </location>
</feature>
<feature type="active site" evidence="1">
    <location>
        <position position="126"/>
    </location>
</feature>
<feature type="binding site" evidence="1">
    <location>
        <position position="50"/>
    </location>
    <ligand>
        <name>Mg(2+)</name>
        <dbReference type="ChEBI" id="CHEBI:18420"/>
    </ligand>
</feature>
<feature type="binding site" evidence="1">
    <location>
        <position position="123"/>
    </location>
    <ligand>
        <name>Mg(2+)</name>
        <dbReference type="ChEBI" id="CHEBI:18420"/>
    </ligand>
</feature>
<feature type="binding site" evidence="1">
    <location>
        <position position="126"/>
    </location>
    <ligand>
        <name>Mg(2+)</name>
        <dbReference type="ChEBI" id="CHEBI:18420"/>
    </ligand>
</feature>